<evidence type="ECO:0000250" key="1"/>
<evidence type="ECO:0000250" key="2">
    <source>
        <dbReference type="UniProtKB" id="O31250"/>
    </source>
</evidence>
<evidence type="ECO:0000255" key="3"/>
<evidence type="ECO:0000305" key="4"/>
<accession>Q9WWW6</accession>
<gene>
    <name type="primary">alkB</name>
</gene>
<comment type="function">
    <text evidence="1">Catalyzes the hydroxylation of n-alkanes in the presence of a NADH-rubredoxin reductase and rubredoxin.</text>
</comment>
<comment type="catalytic activity">
    <reaction evidence="2">
        <text>octane + 2 reduced [rubredoxin] + O2 + 2 H(+) = 2 oxidized [rubredoxin] + octan-1-ol + H2O</text>
        <dbReference type="Rhea" id="RHEA:19341"/>
        <dbReference type="Rhea" id="RHEA-COMP:10302"/>
        <dbReference type="Rhea" id="RHEA-COMP:10303"/>
        <dbReference type="ChEBI" id="CHEBI:15377"/>
        <dbReference type="ChEBI" id="CHEBI:15378"/>
        <dbReference type="ChEBI" id="CHEBI:15379"/>
        <dbReference type="ChEBI" id="CHEBI:16188"/>
        <dbReference type="ChEBI" id="CHEBI:17590"/>
        <dbReference type="ChEBI" id="CHEBI:29033"/>
        <dbReference type="ChEBI" id="CHEBI:29034"/>
        <dbReference type="EC" id="1.14.15.3"/>
    </reaction>
</comment>
<comment type="cofactor">
    <cofactor evidence="1">
        <name>Fe(3+)</name>
        <dbReference type="ChEBI" id="CHEBI:29034"/>
    </cofactor>
    <text evidence="1">Binds 2 Fe(3+) ions per subunit.</text>
</comment>
<comment type="pathway">
    <text>Hydrocarbon metabolism; alkane degradation.</text>
</comment>
<comment type="subcellular location">
    <subcellularLocation>
        <location evidence="4">Cell inner membrane</location>
        <topology evidence="4">Multi-pass membrane protein</topology>
    </subcellularLocation>
</comment>
<comment type="similarity">
    <text evidence="4">Belongs to the fatty acid desaturase type 1 family. AlkB subfamily.</text>
</comment>
<dbReference type="EC" id="1.14.15.3"/>
<dbReference type="EMBL" id="AJ233397">
    <property type="protein sequence ID" value="CAB51047.1"/>
    <property type="molecule type" value="Genomic_DNA"/>
</dbReference>
<dbReference type="SMR" id="Q9WWW6"/>
<dbReference type="BRENDA" id="1.14.15.3">
    <property type="organism ID" value="5092"/>
</dbReference>
<dbReference type="UniPathway" id="UPA00191"/>
<dbReference type="GO" id="GO:0005886">
    <property type="term" value="C:plasma membrane"/>
    <property type="evidence" value="ECO:0007669"/>
    <property type="project" value="UniProtKB-SubCell"/>
</dbReference>
<dbReference type="GO" id="GO:0018685">
    <property type="term" value="F:alkane 1-monooxygenase activity"/>
    <property type="evidence" value="ECO:0000250"/>
    <property type="project" value="UniProtKB"/>
</dbReference>
<dbReference type="GO" id="GO:0046872">
    <property type="term" value="F:metal ion binding"/>
    <property type="evidence" value="ECO:0007669"/>
    <property type="project" value="UniProtKB-KW"/>
</dbReference>
<dbReference type="GO" id="GO:0043448">
    <property type="term" value="P:alkane catabolic process"/>
    <property type="evidence" value="ECO:0000250"/>
    <property type="project" value="UniProtKB"/>
</dbReference>
<dbReference type="GO" id="GO:0006629">
    <property type="term" value="P:lipid metabolic process"/>
    <property type="evidence" value="ECO:0007669"/>
    <property type="project" value="InterPro"/>
</dbReference>
<dbReference type="CDD" id="cd03512">
    <property type="entry name" value="Alkane-hydroxylase"/>
    <property type="match status" value="1"/>
</dbReference>
<dbReference type="InterPro" id="IPR033885">
    <property type="entry name" value="AlkB/XylM"/>
</dbReference>
<dbReference type="InterPro" id="IPR005804">
    <property type="entry name" value="FA_desaturase_dom"/>
</dbReference>
<dbReference type="PANTHER" id="PTHR38674">
    <property type="entry name" value="ALKANE 1-MONOOXYGENASE 1"/>
    <property type="match status" value="1"/>
</dbReference>
<dbReference type="PANTHER" id="PTHR38674:SF1">
    <property type="entry name" value="ALKANE 1-MONOOXYGENASE 1"/>
    <property type="match status" value="1"/>
</dbReference>
<dbReference type="Pfam" id="PF00487">
    <property type="entry name" value="FA_desaturase"/>
    <property type="match status" value="1"/>
</dbReference>
<sequence length="402" mass="46078">MNGKSSVLDSAPEYVDKKKYFWILSTFWPATPMIGIWLANETGWGIFYGLVLAVWYGVLPLLDAMFGEDFNNPPEEVVEKLEKERYYRVLTYLTVPMHYAALIVSAWWVGTQSMSWFEIVALALSLGIVNGLALNTGHELGHKKEAFDRWMAKIVLAVVGYGHFFIEHNKGHHRDVATPMDPATSRMGENIYKFSTREIPGAFRRAWGLEEQRLSRRGQSVWSFDNEILQPMVITVVLYTLLLAFFGPKMLVFLPIQMAFGWWQLTSANYIEHYGLLREKMADGRYEHQKPHHSWNSNHIVSNLVLFHLQRHSDHHAHPTRSYQSLRDFPGLPALPTGYPGAFLMAMIPQWFRSVMDPKVVNWANGDLSKIQIEDSMRAEYIKKFTHNVGADDKRGATAVAS</sequence>
<reference key="1">
    <citation type="journal article" date="1999" name="Environ. Microbiol.">
        <title>Molecular screening for alkane hydroxylase genes in Gram-negative and Gram-positive strains.</title>
        <authorList>
            <person name="Smits T.H.M."/>
            <person name="Roethlisberger M."/>
            <person name="Witholt B."/>
            <person name="Van Beilen J.B."/>
        </authorList>
    </citation>
    <scope>NUCLEOTIDE SEQUENCE [GENOMIC DNA]</scope>
    <source>
        <strain>P1</strain>
    </source>
</reference>
<reference key="2">
    <citation type="journal article" date="2001" name="Microbiology">
        <title>Analysis of Pseudomonas putida alkane degradation gene clusters and flanking insertion sequences: evolution and regulation of the alk-genes.</title>
        <authorList>
            <person name="Van Beilen J.B."/>
            <person name="Panke S."/>
            <person name="Lucchini S."/>
            <person name="Franchini A.G."/>
            <person name="Roethlisberger M."/>
            <person name="Witholt B."/>
        </authorList>
    </citation>
    <scope>NUCLEOTIDE SEQUENCE [GENOMIC DNA]</scope>
    <source>
        <strain>P1</strain>
    </source>
</reference>
<protein>
    <recommendedName>
        <fullName>Alkane 1-monooxygenase</fullName>
        <ecNumber>1.14.15.3</ecNumber>
    </recommendedName>
    <alternativeName>
        <fullName>Alkane hydroxylase</fullName>
        <shortName>AHs</shortName>
    </alternativeName>
    <alternativeName>
        <fullName>Terminal alkane hydroxylase</fullName>
    </alternativeName>
</protein>
<organism>
    <name type="scientific">Pseudomonas putida</name>
    <name type="common">Arthrobacter siderocapsulatus</name>
    <dbReference type="NCBI Taxonomy" id="303"/>
    <lineage>
        <taxon>Bacteria</taxon>
        <taxon>Pseudomonadati</taxon>
        <taxon>Pseudomonadota</taxon>
        <taxon>Gammaproteobacteria</taxon>
        <taxon>Pseudomonadales</taxon>
        <taxon>Pseudomonadaceae</taxon>
        <taxon>Pseudomonas</taxon>
    </lineage>
</organism>
<name>ALKB_PSEPU</name>
<keyword id="KW-0997">Cell inner membrane</keyword>
<keyword id="KW-1003">Cell membrane</keyword>
<keyword id="KW-0408">Iron</keyword>
<keyword id="KW-0472">Membrane</keyword>
<keyword id="KW-0479">Metal-binding</keyword>
<keyword id="KW-0503">Monooxygenase</keyword>
<keyword id="KW-0560">Oxidoreductase</keyword>
<keyword id="KW-0812">Transmembrane</keyword>
<keyword id="KW-1133">Transmembrane helix</keyword>
<feature type="chain" id="PRO_0000392220" description="Alkane 1-monooxygenase">
    <location>
        <begin position="1"/>
        <end position="402"/>
    </location>
</feature>
<feature type="transmembrane region" description="Helical" evidence="3">
    <location>
        <begin position="20"/>
        <end position="40"/>
    </location>
</feature>
<feature type="transmembrane region" description="Helical" evidence="3">
    <location>
        <begin position="42"/>
        <end position="62"/>
    </location>
</feature>
<feature type="transmembrane region" description="Helical" evidence="3">
    <location>
        <begin position="89"/>
        <end position="109"/>
    </location>
</feature>
<feature type="transmembrane region" description="Helical" evidence="3">
    <location>
        <begin position="114"/>
        <end position="134"/>
    </location>
</feature>
<feature type="transmembrane region" description="Helical" evidence="3">
    <location>
        <begin position="146"/>
        <end position="166"/>
    </location>
</feature>
<feature type="transmembrane region" description="Helical" evidence="3">
    <location>
        <begin position="236"/>
        <end position="256"/>
    </location>
</feature>
<feature type="binding site" evidence="1">
    <location>
        <position position="138"/>
    </location>
    <ligand>
        <name>Fe cation</name>
        <dbReference type="ChEBI" id="CHEBI:24875"/>
        <label>1</label>
    </ligand>
</feature>
<feature type="binding site" evidence="1">
    <location>
        <position position="142"/>
    </location>
    <ligand>
        <name>Fe cation</name>
        <dbReference type="ChEBI" id="CHEBI:24875"/>
        <label>1</label>
    </ligand>
</feature>
<feature type="binding site" evidence="1">
    <location>
        <position position="168"/>
    </location>
    <ligand>
        <name>Fe cation</name>
        <dbReference type="ChEBI" id="CHEBI:24875"/>
        <label>1</label>
    </ligand>
</feature>
<feature type="binding site" evidence="1">
    <location>
        <position position="172"/>
    </location>
    <ligand>
        <name>Fe cation</name>
        <dbReference type="ChEBI" id="CHEBI:24875"/>
        <label>1</label>
    </ligand>
</feature>
<feature type="binding site" evidence="1">
    <location>
        <position position="173"/>
    </location>
    <ligand>
        <name>Fe cation</name>
        <dbReference type="ChEBI" id="CHEBI:24875"/>
        <label>2</label>
    </ligand>
</feature>
<feature type="binding site" evidence="1">
    <location>
        <position position="312"/>
    </location>
    <ligand>
        <name>Fe cation</name>
        <dbReference type="ChEBI" id="CHEBI:24875"/>
        <label>2</label>
    </ligand>
</feature>
<feature type="binding site" evidence="1">
    <location>
        <position position="315"/>
    </location>
    <ligand>
        <name>Fe cation</name>
        <dbReference type="ChEBI" id="CHEBI:24875"/>
        <label>2</label>
    </ligand>
</feature>
<feature type="binding site" evidence="1">
    <location>
        <position position="316"/>
    </location>
    <ligand>
        <name>Fe cation</name>
        <dbReference type="ChEBI" id="CHEBI:24875"/>
        <label>2</label>
    </ligand>
</feature>
<proteinExistence type="inferred from homology"/>